<name>KAD_THEAB</name>
<accession>B7IHW7</accession>
<proteinExistence type="inferred from homology"/>
<organism>
    <name type="scientific">Thermosipho africanus (strain TCF52B)</name>
    <dbReference type="NCBI Taxonomy" id="484019"/>
    <lineage>
        <taxon>Bacteria</taxon>
        <taxon>Thermotogati</taxon>
        <taxon>Thermotogota</taxon>
        <taxon>Thermotogae</taxon>
        <taxon>Thermotogales</taxon>
        <taxon>Fervidobacteriaceae</taxon>
        <taxon>Thermosipho</taxon>
    </lineage>
</organism>
<evidence type="ECO:0000255" key="1">
    <source>
        <dbReference type="HAMAP-Rule" id="MF_00235"/>
    </source>
</evidence>
<feature type="chain" id="PRO_1000191172" description="Adenylate kinase">
    <location>
        <begin position="1"/>
        <end position="214"/>
    </location>
</feature>
<feature type="region of interest" description="NMP" evidence="1">
    <location>
        <begin position="30"/>
        <end position="59"/>
    </location>
</feature>
<feature type="region of interest" description="LID" evidence="1">
    <location>
        <begin position="126"/>
        <end position="163"/>
    </location>
</feature>
<feature type="binding site" evidence="1">
    <location>
        <begin position="10"/>
        <end position="15"/>
    </location>
    <ligand>
        <name>ATP</name>
        <dbReference type="ChEBI" id="CHEBI:30616"/>
    </ligand>
</feature>
<feature type="binding site" evidence="1">
    <location>
        <position position="31"/>
    </location>
    <ligand>
        <name>AMP</name>
        <dbReference type="ChEBI" id="CHEBI:456215"/>
    </ligand>
</feature>
<feature type="binding site" evidence="1">
    <location>
        <position position="36"/>
    </location>
    <ligand>
        <name>AMP</name>
        <dbReference type="ChEBI" id="CHEBI:456215"/>
    </ligand>
</feature>
<feature type="binding site" evidence="1">
    <location>
        <begin position="57"/>
        <end position="59"/>
    </location>
    <ligand>
        <name>AMP</name>
        <dbReference type="ChEBI" id="CHEBI:456215"/>
    </ligand>
</feature>
<feature type="binding site" evidence="1">
    <location>
        <begin position="85"/>
        <end position="88"/>
    </location>
    <ligand>
        <name>AMP</name>
        <dbReference type="ChEBI" id="CHEBI:456215"/>
    </ligand>
</feature>
<feature type="binding site" evidence="1">
    <location>
        <position position="92"/>
    </location>
    <ligand>
        <name>AMP</name>
        <dbReference type="ChEBI" id="CHEBI:456215"/>
    </ligand>
</feature>
<feature type="binding site" evidence="1">
    <location>
        <position position="127"/>
    </location>
    <ligand>
        <name>ATP</name>
        <dbReference type="ChEBI" id="CHEBI:30616"/>
    </ligand>
</feature>
<feature type="binding site" evidence="1">
    <location>
        <position position="130"/>
    </location>
    <ligand>
        <name>Zn(2+)</name>
        <dbReference type="ChEBI" id="CHEBI:29105"/>
        <note>structural</note>
    </ligand>
</feature>
<feature type="binding site" evidence="1">
    <location>
        <position position="133"/>
    </location>
    <ligand>
        <name>Zn(2+)</name>
        <dbReference type="ChEBI" id="CHEBI:29105"/>
        <note>structural</note>
    </ligand>
</feature>
<feature type="binding site" evidence="1">
    <location>
        <begin position="136"/>
        <end position="137"/>
    </location>
    <ligand>
        <name>ATP</name>
        <dbReference type="ChEBI" id="CHEBI:30616"/>
    </ligand>
</feature>
<feature type="binding site" evidence="1">
    <location>
        <position position="150"/>
    </location>
    <ligand>
        <name>Zn(2+)</name>
        <dbReference type="ChEBI" id="CHEBI:29105"/>
        <note>structural</note>
    </ligand>
</feature>
<feature type="binding site" evidence="1">
    <location>
        <position position="153"/>
    </location>
    <ligand>
        <name>Zn(2+)</name>
        <dbReference type="ChEBI" id="CHEBI:29105"/>
        <note>structural</note>
    </ligand>
</feature>
<feature type="binding site" evidence="1">
    <location>
        <position position="160"/>
    </location>
    <ligand>
        <name>AMP</name>
        <dbReference type="ChEBI" id="CHEBI:456215"/>
    </ligand>
</feature>
<feature type="binding site" evidence="1">
    <location>
        <position position="171"/>
    </location>
    <ligand>
        <name>AMP</name>
        <dbReference type="ChEBI" id="CHEBI:456215"/>
    </ligand>
</feature>
<feature type="binding site" evidence="1">
    <location>
        <position position="199"/>
    </location>
    <ligand>
        <name>ATP</name>
        <dbReference type="ChEBI" id="CHEBI:30616"/>
    </ligand>
</feature>
<protein>
    <recommendedName>
        <fullName evidence="1">Adenylate kinase</fullName>
        <shortName evidence="1">AK</shortName>
        <ecNumber evidence="1">2.7.4.3</ecNumber>
    </recommendedName>
    <alternativeName>
        <fullName evidence="1">ATP-AMP transphosphorylase</fullName>
    </alternativeName>
    <alternativeName>
        <fullName evidence="1">ATP:AMP phosphotransferase</fullName>
    </alternativeName>
    <alternativeName>
        <fullName evidence="1">Adenylate monophosphate kinase</fullName>
    </alternativeName>
</protein>
<gene>
    <name evidence="1" type="primary">adk</name>
    <name type="ordered locus">THA_1236</name>
</gene>
<keyword id="KW-0067">ATP-binding</keyword>
<keyword id="KW-0963">Cytoplasm</keyword>
<keyword id="KW-0418">Kinase</keyword>
<keyword id="KW-0479">Metal-binding</keyword>
<keyword id="KW-0545">Nucleotide biosynthesis</keyword>
<keyword id="KW-0547">Nucleotide-binding</keyword>
<keyword id="KW-1185">Reference proteome</keyword>
<keyword id="KW-0808">Transferase</keyword>
<keyword id="KW-0862">Zinc</keyword>
<sequence length="214" mass="24381">MNMVFLGPPGAGKGTYAKRLIEMLNIPHISTGDMFREAVASKSELGKKVEEILKRGDLVPDDLTNSIVKDRLSKEDCKNGFILDGFPRTVAQAKALDEIMRSLGKDLDYVIYFEVDEEEVVKRISNRRICSNCGKIYNLITLPPKVDGKCDVCGGTLYQREDDKEEVVRKRYRVYMENTYPVIEYYQKSNKLFTVNGALDVDSVIKEVLNIIRR</sequence>
<dbReference type="EC" id="2.7.4.3" evidence="1"/>
<dbReference type="EMBL" id="CP001185">
    <property type="protein sequence ID" value="ACJ75681.1"/>
    <property type="molecule type" value="Genomic_DNA"/>
</dbReference>
<dbReference type="RefSeq" id="WP_004101476.1">
    <property type="nucleotide sequence ID" value="NC_011653.1"/>
</dbReference>
<dbReference type="SMR" id="B7IHW7"/>
<dbReference type="STRING" id="484019.THA_1236"/>
<dbReference type="KEGG" id="taf:THA_1236"/>
<dbReference type="eggNOG" id="COG0563">
    <property type="taxonomic scope" value="Bacteria"/>
</dbReference>
<dbReference type="HOGENOM" id="CLU_032354_1_2_0"/>
<dbReference type="OrthoDB" id="9805030at2"/>
<dbReference type="UniPathway" id="UPA00588">
    <property type="reaction ID" value="UER00649"/>
</dbReference>
<dbReference type="Proteomes" id="UP000002453">
    <property type="component" value="Chromosome"/>
</dbReference>
<dbReference type="GO" id="GO:0005737">
    <property type="term" value="C:cytoplasm"/>
    <property type="evidence" value="ECO:0007669"/>
    <property type="project" value="UniProtKB-SubCell"/>
</dbReference>
<dbReference type="GO" id="GO:0004017">
    <property type="term" value="F:adenylate kinase activity"/>
    <property type="evidence" value="ECO:0007669"/>
    <property type="project" value="UniProtKB-UniRule"/>
</dbReference>
<dbReference type="GO" id="GO:0005524">
    <property type="term" value="F:ATP binding"/>
    <property type="evidence" value="ECO:0007669"/>
    <property type="project" value="UniProtKB-UniRule"/>
</dbReference>
<dbReference type="GO" id="GO:0008270">
    <property type="term" value="F:zinc ion binding"/>
    <property type="evidence" value="ECO:0007669"/>
    <property type="project" value="UniProtKB-UniRule"/>
</dbReference>
<dbReference type="GO" id="GO:0044209">
    <property type="term" value="P:AMP salvage"/>
    <property type="evidence" value="ECO:0007669"/>
    <property type="project" value="UniProtKB-UniRule"/>
</dbReference>
<dbReference type="CDD" id="cd01428">
    <property type="entry name" value="ADK"/>
    <property type="match status" value="1"/>
</dbReference>
<dbReference type="FunFam" id="3.40.50.300:FF:000106">
    <property type="entry name" value="Adenylate kinase mitochondrial"/>
    <property type="match status" value="1"/>
</dbReference>
<dbReference type="Gene3D" id="3.40.50.300">
    <property type="entry name" value="P-loop containing nucleotide triphosphate hydrolases"/>
    <property type="match status" value="1"/>
</dbReference>
<dbReference type="HAMAP" id="MF_00235">
    <property type="entry name" value="Adenylate_kinase_Adk"/>
    <property type="match status" value="1"/>
</dbReference>
<dbReference type="InterPro" id="IPR006259">
    <property type="entry name" value="Adenyl_kin_sub"/>
</dbReference>
<dbReference type="InterPro" id="IPR000850">
    <property type="entry name" value="Adenylat/UMP-CMP_kin"/>
</dbReference>
<dbReference type="InterPro" id="IPR033690">
    <property type="entry name" value="Adenylat_kinase_CS"/>
</dbReference>
<dbReference type="InterPro" id="IPR007862">
    <property type="entry name" value="Adenylate_kinase_lid-dom"/>
</dbReference>
<dbReference type="InterPro" id="IPR027417">
    <property type="entry name" value="P-loop_NTPase"/>
</dbReference>
<dbReference type="NCBIfam" id="TIGR01351">
    <property type="entry name" value="adk"/>
    <property type="match status" value="1"/>
</dbReference>
<dbReference type="NCBIfam" id="NF001380">
    <property type="entry name" value="PRK00279.1-2"/>
    <property type="match status" value="1"/>
</dbReference>
<dbReference type="NCBIfam" id="NF001381">
    <property type="entry name" value="PRK00279.1-3"/>
    <property type="match status" value="1"/>
</dbReference>
<dbReference type="NCBIfam" id="NF001386">
    <property type="entry name" value="PRK00279.2-4"/>
    <property type="match status" value="1"/>
</dbReference>
<dbReference type="NCBIfam" id="NF011099">
    <property type="entry name" value="PRK14526.1"/>
    <property type="match status" value="1"/>
</dbReference>
<dbReference type="NCBIfam" id="NF011100">
    <property type="entry name" value="PRK14527.1"/>
    <property type="match status" value="1"/>
</dbReference>
<dbReference type="PANTHER" id="PTHR23359">
    <property type="entry name" value="NUCLEOTIDE KINASE"/>
    <property type="match status" value="1"/>
</dbReference>
<dbReference type="Pfam" id="PF00406">
    <property type="entry name" value="ADK"/>
    <property type="match status" value="1"/>
</dbReference>
<dbReference type="Pfam" id="PF05191">
    <property type="entry name" value="ADK_lid"/>
    <property type="match status" value="1"/>
</dbReference>
<dbReference type="PRINTS" id="PR00094">
    <property type="entry name" value="ADENYLTKNASE"/>
</dbReference>
<dbReference type="SUPFAM" id="SSF52540">
    <property type="entry name" value="P-loop containing nucleoside triphosphate hydrolases"/>
    <property type="match status" value="1"/>
</dbReference>
<dbReference type="PROSITE" id="PS00113">
    <property type="entry name" value="ADENYLATE_KINASE"/>
    <property type="match status" value="1"/>
</dbReference>
<comment type="function">
    <text evidence="1">Catalyzes the reversible transfer of the terminal phosphate group between ATP and AMP. Plays an important role in cellular energy homeostasis and in adenine nucleotide metabolism.</text>
</comment>
<comment type="catalytic activity">
    <reaction evidence="1">
        <text>AMP + ATP = 2 ADP</text>
        <dbReference type="Rhea" id="RHEA:12973"/>
        <dbReference type="ChEBI" id="CHEBI:30616"/>
        <dbReference type="ChEBI" id="CHEBI:456215"/>
        <dbReference type="ChEBI" id="CHEBI:456216"/>
        <dbReference type="EC" id="2.7.4.3"/>
    </reaction>
</comment>
<comment type="pathway">
    <text evidence="1">Purine metabolism; AMP biosynthesis via salvage pathway; AMP from ADP: step 1/1.</text>
</comment>
<comment type="subunit">
    <text evidence="1">Monomer.</text>
</comment>
<comment type="subcellular location">
    <subcellularLocation>
        <location evidence="1">Cytoplasm</location>
    </subcellularLocation>
</comment>
<comment type="domain">
    <text evidence="1">Consists of three domains, a large central CORE domain and two small peripheral domains, NMPbind and LID, which undergo movements during catalysis. The LID domain closes over the site of phosphoryl transfer upon ATP binding. Assembling and dissambling the active center during each catalytic cycle provides an effective means to prevent ATP hydrolysis. Some bacteria have evolved a zinc-coordinating structure that stabilizes the LID domain.</text>
</comment>
<comment type="similarity">
    <text evidence="1">Belongs to the adenylate kinase family.</text>
</comment>
<reference key="1">
    <citation type="journal article" date="2009" name="J. Bacteriol.">
        <title>The genome of Thermosipho africanus TCF52B: lateral genetic connections to the Firmicutes and Archaea.</title>
        <authorList>
            <person name="Nesboe C.L."/>
            <person name="Bapteste E."/>
            <person name="Curtis B."/>
            <person name="Dahle H."/>
            <person name="Lopez P."/>
            <person name="Macleod D."/>
            <person name="Dlutek M."/>
            <person name="Bowman S."/>
            <person name="Zhaxybayeva O."/>
            <person name="Birkeland N.-K."/>
            <person name="Doolittle W.F."/>
        </authorList>
    </citation>
    <scope>NUCLEOTIDE SEQUENCE [LARGE SCALE GENOMIC DNA]</scope>
    <source>
        <strain>TCF52B</strain>
    </source>
</reference>